<name>RS19_STRP4</name>
<feature type="chain" id="PRO_1000128042" description="Small ribosomal subunit protein uS19">
    <location>
        <begin position="1"/>
        <end position="93"/>
    </location>
</feature>
<sequence>MGRSLKKGPFVDEHLMKKVEAQANDEKKKVIKTWSRRSTIFPSFIGYTIAVYDGRKHVPVYIQEDMVGHKLGEFAPTRTYKGHAADDKKTRRK</sequence>
<protein>
    <recommendedName>
        <fullName evidence="1">Small ribosomal subunit protein uS19</fullName>
    </recommendedName>
    <alternativeName>
        <fullName evidence="2">30S ribosomal protein S19</fullName>
    </alternativeName>
</protein>
<dbReference type="EMBL" id="CP001015">
    <property type="protein sequence ID" value="ACF54934.1"/>
    <property type="molecule type" value="Genomic_DNA"/>
</dbReference>
<dbReference type="SMR" id="B5E6F9"/>
<dbReference type="KEGG" id="spx:SPG_0199"/>
<dbReference type="HOGENOM" id="CLU_144911_0_1_9"/>
<dbReference type="GO" id="GO:0005737">
    <property type="term" value="C:cytoplasm"/>
    <property type="evidence" value="ECO:0007669"/>
    <property type="project" value="UniProtKB-ARBA"/>
</dbReference>
<dbReference type="GO" id="GO:0015935">
    <property type="term" value="C:small ribosomal subunit"/>
    <property type="evidence" value="ECO:0007669"/>
    <property type="project" value="InterPro"/>
</dbReference>
<dbReference type="GO" id="GO:0019843">
    <property type="term" value="F:rRNA binding"/>
    <property type="evidence" value="ECO:0007669"/>
    <property type="project" value="UniProtKB-UniRule"/>
</dbReference>
<dbReference type="GO" id="GO:0003735">
    <property type="term" value="F:structural constituent of ribosome"/>
    <property type="evidence" value="ECO:0007669"/>
    <property type="project" value="InterPro"/>
</dbReference>
<dbReference type="GO" id="GO:0000028">
    <property type="term" value="P:ribosomal small subunit assembly"/>
    <property type="evidence" value="ECO:0007669"/>
    <property type="project" value="TreeGrafter"/>
</dbReference>
<dbReference type="GO" id="GO:0006412">
    <property type="term" value="P:translation"/>
    <property type="evidence" value="ECO:0007669"/>
    <property type="project" value="UniProtKB-UniRule"/>
</dbReference>
<dbReference type="FunFam" id="3.30.860.10:FF:000001">
    <property type="entry name" value="30S ribosomal protein S19"/>
    <property type="match status" value="1"/>
</dbReference>
<dbReference type="Gene3D" id="3.30.860.10">
    <property type="entry name" value="30s Ribosomal Protein S19, Chain A"/>
    <property type="match status" value="1"/>
</dbReference>
<dbReference type="HAMAP" id="MF_00531">
    <property type="entry name" value="Ribosomal_uS19"/>
    <property type="match status" value="1"/>
</dbReference>
<dbReference type="InterPro" id="IPR002222">
    <property type="entry name" value="Ribosomal_uS19"/>
</dbReference>
<dbReference type="InterPro" id="IPR005732">
    <property type="entry name" value="Ribosomal_uS19_bac-type"/>
</dbReference>
<dbReference type="InterPro" id="IPR020934">
    <property type="entry name" value="Ribosomal_uS19_CS"/>
</dbReference>
<dbReference type="InterPro" id="IPR023575">
    <property type="entry name" value="Ribosomal_uS19_SF"/>
</dbReference>
<dbReference type="NCBIfam" id="TIGR01050">
    <property type="entry name" value="rpsS_bact"/>
    <property type="match status" value="1"/>
</dbReference>
<dbReference type="PANTHER" id="PTHR11880">
    <property type="entry name" value="RIBOSOMAL PROTEIN S19P FAMILY MEMBER"/>
    <property type="match status" value="1"/>
</dbReference>
<dbReference type="PANTHER" id="PTHR11880:SF8">
    <property type="entry name" value="SMALL RIBOSOMAL SUBUNIT PROTEIN US19M"/>
    <property type="match status" value="1"/>
</dbReference>
<dbReference type="Pfam" id="PF00203">
    <property type="entry name" value="Ribosomal_S19"/>
    <property type="match status" value="1"/>
</dbReference>
<dbReference type="PIRSF" id="PIRSF002144">
    <property type="entry name" value="Ribosomal_S19"/>
    <property type="match status" value="1"/>
</dbReference>
<dbReference type="PRINTS" id="PR00975">
    <property type="entry name" value="RIBOSOMALS19"/>
</dbReference>
<dbReference type="SUPFAM" id="SSF54570">
    <property type="entry name" value="Ribosomal protein S19"/>
    <property type="match status" value="1"/>
</dbReference>
<dbReference type="PROSITE" id="PS00323">
    <property type="entry name" value="RIBOSOMAL_S19"/>
    <property type="match status" value="1"/>
</dbReference>
<organism>
    <name type="scientific">Streptococcus pneumoniae serotype 19F (strain G54)</name>
    <dbReference type="NCBI Taxonomy" id="512566"/>
    <lineage>
        <taxon>Bacteria</taxon>
        <taxon>Bacillati</taxon>
        <taxon>Bacillota</taxon>
        <taxon>Bacilli</taxon>
        <taxon>Lactobacillales</taxon>
        <taxon>Streptococcaceae</taxon>
        <taxon>Streptococcus</taxon>
    </lineage>
</organism>
<keyword id="KW-0687">Ribonucleoprotein</keyword>
<keyword id="KW-0689">Ribosomal protein</keyword>
<keyword id="KW-0694">RNA-binding</keyword>
<keyword id="KW-0699">rRNA-binding</keyword>
<reference key="1">
    <citation type="journal article" date="2001" name="Microb. Drug Resist.">
        <title>Annotated draft genomic sequence from a Streptococcus pneumoniae type 19F clinical isolate.</title>
        <authorList>
            <person name="Dopazo J."/>
            <person name="Mendoza A."/>
            <person name="Herrero J."/>
            <person name="Caldara F."/>
            <person name="Humbert Y."/>
            <person name="Friedli L."/>
            <person name="Guerrier M."/>
            <person name="Grand-Schenk E."/>
            <person name="Gandin C."/>
            <person name="de Francesco M."/>
            <person name="Polissi A."/>
            <person name="Buell G."/>
            <person name="Feger G."/>
            <person name="Garcia E."/>
            <person name="Peitsch M."/>
            <person name="Garcia-Bustos J.F."/>
        </authorList>
    </citation>
    <scope>NUCLEOTIDE SEQUENCE [LARGE SCALE GENOMIC DNA]</scope>
    <source>
        <strain>G54</strain>
    </source>
</reference>
<reference key="2">
    <citation type="submission" date="2008-03" db="EMBL/GenBank/DDBJ databases">
        <title>Pneumococcal beta glucoside metabolism investigated by whole genome comparison.</title>
        <authorList>
            <person name="Mulas L."/>
            <person name="Trappetti C."/>
            <person name="Hakenbeck R."/>
            <person name="Iannelli F."/>
            <person name="Pozzi G."/>
            <person name="Davidsen T.M."/>
            <person name="Tettelin H."/>
            <person name="Oggioni M."/>
        </authorList>
    </citation>
    <scope>NUCLEOTIDE SEQUENCE [LARGE SCALE GENOMIC DNA]</scope>
    <source>
        <strain>G54</strain>
    </source>
</reference>
<proteinExistence type="inferred from homology"/>
<accession>B5E6F9</accession>
<evidence type="ECO:0000255" key="1">
    <source>
        <dbReference type="HAMAP-Rule" id="MF_00531"/>
    </source>
</evidence>
<evidence type="ECO:0000305" key="2"/>
<comment type="function">
    <text evidence="1">Protein S19 forms a complex with S13 that binds strongly to the 16S ribosomal RNA.</text>
</comment>
<comment type="similarity">
    <text evidence="1">Belongs to the universal ribosomal protein uS19 family.</text>
</comment>
<gene>
    <name evidence="1" type="primary">rpsS</name>
    <name type="ordered locus">SPG_0199</name>
</gene>